<comment type="similarity">
    <text evidence="1">Belongs to the dGTPase family. Type 2 subfamily.</text>
</comment>
<gene>
    <name type="ordered locus">Mvan_3815</name>
</gene>
<sequence length="424" mass="45984">MSPRLQDSYDEFDRQRLVAEPAKSAGLPGTDTEHRSDFARDRARVLHCAALRRLADKTQVVGPRDGETPRTRLTHSLEVAQIGRGMAIGLGCDPDLVDLAGLAHDIGHPPYGHNGERALDEIIKGFGGFEGNAQNFRILTRLEPKVLDEHGRSAGLNLTRASLDAVAKYPWPRQEGRRKFGFYGDDMAAAQWVRHGAPAARPCLEAQVMDWADDVAYSVHDVEDGVISGRIDLRVLADADAAASLAHVGAQSFPTLTPDDLVAAAERLSQVPVVAAVGKFDGTLSASVALKTLTSELVGRFANAALTATRDVAGPGPLRRFDAELTVPSLVRAEVVLLKTLALQFIMSDHRHLQIQADQRNRIHEVALALWGQAPGSLDPQFAAEFAAAPDDGARLRVVIDQIASYTESRLERVHEARSPRPLD</sequence>
<accession>A1TBP6</accession>
<protein>
    <recommendedName>
        <fullName evidence="1">Deoxyguanosinetriphosphate triphosphohydrolase-like protein</fullName>
    </recommendedName>
</protein>
<reference key="1">
    <citation type="submission" date="2006-12" db="EMBL/GenBank/DDBJ databases">
        <title>Complete sequence of Mycobacterium vanbaalenii PYR-1.</title>
        <authorList>
            <consortium name="US DOE Joint Genome Institute"/>
            <person name="Copeland A."/>
            <person name="Lucas S."/>
            <person name="Lapidus A."/>
            <person name="Barry K."/>
            <person name="Detter J.C."/>
            <person name="Glavina del Rio T."/>
            <person name="Hammon N."/>
            <person name="Israni S."/>
            <person name="Dalin E."/>
            <person name="Tice H."/>
            <person name="Pitluck S."/>
            <person name="Singan V."/>
            <person name="Schmutz J."/>
            <person name="Larimer F."/>
            <person name="Land M."/>
            <person name="Hauser L."/>
            <person name="Kyrpides N."/>
            <person name="Anderson I.J."/>
            <person name="Miller C."/>
            <person name="Richardson P."/>
        </authorList>
    </citation>
    <scope>NUCLEOTIDE SEQUENCE [LARGE SCALE GENOMIC DNA]</scope>
    <source>
        <strain>DSM 7251 / JCM 13017 / BCRC 16820 / KCTC 9966 / NRRL B-24157 / PYR-1</strain>
    </source>
</reference>
<proteinExistence type="inferred from homology"/>
<name>DGTL1_MYCVP</name>
<evidence type="ECO:0000255" key="1">
    <source>
        <dbReference type="HAMAP-Rule" id="MF_01212"/>
    </source>
</evidence>
<evidence type="ECO:0000255" key="2">
    <source>
        <dbReference type="PROSITE-ProRule" id="PRU01175"/>
    </source>
</evidence>
<dbReference type="EMBL" id="CP000511">
    <property type="protein sequence ID" value="ABM14596.1"/>
    <property type="molecule type" value="Genomic_DNA"/>
</dbReference>
<dbReference type="RefSeq" id="WP_011780983.1">
    <property type="nucleotide sequence ID" value="NZ_JACKSD010000345.1"/>
</dbReference>
<dbReference type="SMR" id="A1TBP6"/>
<dbReference type="STRING" id="350058.Mvan_3815"/>
<dbReference type="KEGG" id="mva:Mvan_3815"/>
<dbReference type="eggNOG" id="COG0232">
    <property type="taxonomic scope" value="Bacteria"/>
</dbReference>
<dbReference type="HOGENOM" id="CLU_028163_0_1_11"/>
<dbReference type="Proteomes" id="UP000009159">
    <property type="component" value="Chromosome"/>
</dbReference>
<dbReference type="GO" id="GO:0008832">
    <property type="term" value="F:dGTPase activity"/>
    <property type="evidence" value="ECO:0007669"/>
    <property type="project" value="TreeGrafter"/>
</dbReference>
<dbReference type="GO" id="GO:0006203">
    <property type="term" value="P:dGTP catabolic process"/>
    <property type="evidence" value="ECO:0007669"/>
    <property type="project" value="TreeGrafter"/>
</dbReference>
<dbReference type="CDD" id="cd00077">
    <property type="entry name" value="HDc"/>
    <property type="match status" value="1"/>
</dbReference>
<dbReference type="Gene3D" id="1.10.3210.10">
    <property type="entry name" value="Hypothetical protein af1432"/>
    <property type="match status" value="1"/>
</dbReference>
<dbReference type="HAMAP" id="MF_01212">
    <property type="entry name" value="dGTPase_type2"/>
    <property type="match status" value="1"/>
</dbReference>
<dbReference type="InterPro" id="IPR006261">
    <property type="entry name" value="dGTPase"/>
</dbReference>
<dbReference type="InterPro" id="IPR050135">
    <property type="entry name" value="dGTPase-like"/>
</dbReference>
<dbReference type="InterPro" id="IPR023023">
    <property type="entry name" value="dNTPase_2"/>
</dbReference>
<dbReference type="InterPro" id="IPR003607">
    <property type="entry name" value="HD/PDEase_dom"/>
</dbReference>
<dbReference type="InterPro" id="IPR006674">
    <property type="entry name" value="HD_domain"/>
</dbReference>
<dbReference type="InterPro" id="IPR026875">
    <property type="entry name" value="PHydrolase_assoc_dom"/>
</dbReference>
<dbReference type="NCBIfam" id="TIGR01353">
    <property type="entry name" value="dGTP_triPase"/>
    <property type="match status" value="1"/>
</dbReference>
<dbReference type="NCBIfam" id="NF002829">
    <property type="entry name" value="PRK03007.1"/>
    <property type="match status" value="1"/>
</dbReference>
<dbReference type="PANTHER" id="PTHR11373:SF32">
    <property type="entry name" value="DEOXYGUANOSINETRIPHOSPHATE TRIPHOSPHOHYDROLASE"/>
    <property type="match status" value="1"/>
</dbReference>
<dbReference type="PANTHER" id="PTHR11373">
    <property type="entry name" value="DEOXYNUCLEOSIDE TRIPHOSPHATE TRIPHOSPHOHYDROLASE"/>
    <property type="match status" value="1"/>
</dbReference>
<dbReference type="Pfam" id="PF01966">
    <property type="entry name" value="HD"/>
    <property type="match status" value="1"/>
</dbReference>
<dbReference type="Pfam" id="PF13286">
    <property type="entry name" value="HD_assoc"/>
    <property type="match status" value="1"/>
</dbReference>
<dbReference type="SMART" id="SM00471">
    <property type="entry name" value="HDc"/>
    <property type="match status" value="1"/>
</dbReference>
<dbReference type="SUPFAM" id="SSF109604">
    <property type="entry name" value="HD-domain/PDEase-like"/>
    <property type="match status" value="1"/>
</dbReference>
<dbReference type="PROSITE" id="PS51831">
    <property type="entry name" value="HD"/>
    <property type="match status" value="1"/>
</dbReference>
<feature type="chain" id="PRO_1000066428" description="Deoxyguanosinetriphosphate triphosphohydrolase-like protein">
    <location>
        <begin position="1"/>
        <end position="424"/>
    </location>
</feature>
<feature type="domain" description="HD" evidence="2">
    <location>
        <begin position="72"/>
        <end position="218"/>
    </location>
</feature>
<organism>
    <name type="scientific">Mycolicibacterium vanbaalenii (strain DSM 7251 / JCM 13017 / BCRC 16820 / KCTC 9966 / NRRL B-24157 / PYR-1)</name>
    <name type="common">Mycobacterium vanbaalenii</name>
    <dbReference type="NCBI Taxonomy" id="350058"/>
    <lineage>
        <taxon>Bacteria</taxon>
        <taxon>Bacillati</taxon>
        <taxon>Actinomycetota</taxon>
        <taxon>Actinomycetes</taxon>
        <taxon>Mycobacteriales</taxon>
        <taxon>Mycobacteriaceae</taxon>
        <taxon>Mycolicibacterium</taxon>
    </lineage>
</organism>
<keyword id="KW-0378">Hydrolase</keyword>